<sequence>MAAPVDLELKKAFTELQAKVIDTQQKVKLADIQIEQLNRTKKHAHLTDTEIMTLVDETNMYEGVGRMFILQSKEAIHNQLLEKQKIAEEKIKELEQKKSYLERSVKEAEDNIREMLMARRAQ</sequence>
<keyword id="KW-0007">Acetylation</keyword>
<keyword id="KW-0143">Chaperone</keyword>
<keyword id="KW-1185">Reference proteome</keyword>
<dbReference type="EMBL" id="CR858988">
    <property type="protein sequence ID" value="CAH91183.1"/>
    <property type="molecule type" value="mRNA"/>
</dbReference>
<dbReference type="RefSeq" id="NP_001127385.1">
    <property type="nucleotide sequence ID" value="NM_001133913.1"/>
</dbReference>
<dbReference type="SMR" id="Q5RAM7"/>
<dbReference type="FunCoup" id="Q5RAM7">
    <property type="interactions" value="1502"/>
</dbReference>
<dbReference type="STRING" id="9601.ENSPPYP00000017723"/>
<dbReference type="Ensembl" id="ENSPPYT00000053703.1">
    <property type="protein sequence ID" value="ENSPPYP00000045645.1"/>
    <property type="gene ID" value="ENSPPYG00000030565.1"/>
</dbReference>
<dbReference type="GeneID" id="100174451"/>
<dbReference type="KEGG" id="pon:100174451"/>
<dbReference type="CTD" id="5201"/>
<dbReference type="eggNOG" id="KOG3501">
    <property type="taxonomic scope" value="Eukaryota"/>
</dbReference>
<dbReference type="GeneTree" id="ENSGT00390000009786"/>
<dbReference type="InParanoid" id="Q5RAM7"/>
<dbReference type="OMA" id="REMIQQK"/>
<dbReference type="OrthoDB" id="5242628at2759"/>
<dbReference type="Proteomes" id="UP000001595">
    <property type="component" value="Chromosome 5"/>
</dbReference>
<dbReference type="GO" id="GO:0005737">
    <property type="term" value="C:cytoplasm"/>
    <property type="evidence" value="ECO:0007669"/>
    <property type="project" value="TreeGrafter"/>
</dbReference>
<dbReference type="GO" id="GO:0016272">
    <property type="term" value="C:prefoldin complex"/>
    <property type="evidence" value="ECO:0007669"/>
    <property type="project" value="Ensembl"/>
</dbReference>
<dbReference type="GO" id="GO:0001540">
    <property type="term" value="F:amyloid-beta binding"/>
    <property type="evidence" value="ECO:0007669"/>
    <property type="project" value="Ensembl"/>
</dbReference>
<dbReference type="GO" id="GO:0044183">
    <property type="term" value="F:protein folding chaperone"/>
    <property type="evidence" value="ECO:0007669"/>
    <property type="project" value="Ensembl"/>
</dbReference>
<dbReference type="GO" id="GO:0051082">
    <property type="term" value="F:unfolded protein binding"/>
    <property type="evidence" value="ECO:0007669"/>
    <property type="project" value="Ensembl"/>
</dbReference>
<dbReference type="GO" id="GO:1905907">
    <property type="term" value="P:negative regulation of amyloid fibril formation"/>
    <property type="evidence" value="ECO:0007669"/>
    <property type="project" value="Ensembl"/>
</dbReference>
<dbReference type="CDD" id="cd23164">
    <property type="entry name" value="Prefoldin_1"/>
    <property type="match status" value="1"/>
</dbReference>
<dbReference type="FunFam" id="1.10.287.370:FF:000006">
    <property type="entry name" value="prefoldin subunit 1"/>
    <property type="match status" value="1"/>
</dbReference>
<dbReference type="Gene3D" id="1.10.287.370">
    <property type="match status" value="1"/>
</dbReference>
<dbReference type="InterPro" id="IPR002777">
    <property type="entry name" value="PFD_beta-like"/>
</dbReference>
<dbReference type="InterPro" id="IPR009053">
    <property type="entry name" value="Prefoldin"/>
</dbReference>
<dbReference type="PANTHER" id="PTHR20903:SF0">
    <property type="entry name" value="PREFOLDIN SUBUNIT 1"/>
    <property type="match status" value="1"/>
</dbReference>
<dbReference type="PANTHER" id="PTHR20903">
    <property type="entry name" value="PREFOLDIN SUBUNIT 1-RELATED"/>
    <property type="match status" value="1"/>
</dbReference>
<dbReference type="Pfam" id="PF01920">
    <property type="entry name" value="Prefoldin_2"/>
    <property type="match status" value="1"/>
</dbReference>
<dbReference type="SUPFAM" id="SSF46579">
    <property type="entry name" value="Prefoldin"/>
    <property type="match status" value="1"/>
</dbReference>
<evidence type="ECO:0000250" key="1"/>
<evidence type="ECO:0000250" key="2">
    <source>
        <dbReference type="UniProtKB" id="O60925"/>
    </source>
</evidence>
<evidence type="ECO:0000305" key="3"/>
<organism>
    <name type="scientific">Pongo abelii</name>
    <name type="common">Sumatran orangutan</name>
    <name type="synonym">Pongo pygmaeus abelii</name>
    <dbReference type="NCBI Taxonomy" id="9601"/>
    <lineage>
        <taxon>Eukaryota</taxon>
        <taxon>Metazoa</taxon>
        <taxon>Chordata</taxon>
        <taxon>Craniata</taxon>
        <taxon>Vertebrata</taxon>
        <taxon>Euteleostomi</taxon>
        <taxon>Mammalia</taxon>
        <taxon>Eutheria</taxon>
        <taxon>Euarchontoglires</taxon>
        <taxon>Primates</taxon>
        <taxon>Haplorrhini</taxon>
        <taxon>Catarrhini</taxon>
        <taxon>Hominidae</taxon>
        <taxon>Pongo</taxon>
    </lineage>
</organism>
<gene>
    <name type="primary">PFDN1</name>
</gene>
<comment type="function">
    <text evidence="1">Binds specifically to cytosolic chaperonin (c-CPN) and transfers target proteins to it. Binds to nascent polypeptide chain and promotes folding in an environment in which there are many competing pathways for nonnative proteins (By similarity).</text>
</comment>
<comment type="subunit">
    <text evidence="1">Heterohexamer of two PFD-alpha type and four PFD-beta type subunits.</text>
</comment>
<comment type="similarity">
    <text evidence="3">Belongs to the prefoldin subunit beta family.</text>
</comment>
<name>PFD1_PONAB</name>
<proteinExistence type="evidence at transcript level"/>
<reference key="1">
    <citation type="submission" date="2004-11" db="EMBL/GenBank/DDBJ databases">
        <authorList>
            <consortium name="The German cDNA consortium"/>
        </authorList>
    </citation>
    <scope>NUCLEOTIDE SEQUENCE [LARGE SCALE MRNA]</scope>
    <source>
        <tissue>Brain cortex</tissue>
    </source>
</reference>
<protein>
    <recommendedName>
        <fullName>Prefoldin subunit 1</fullName>
    </recommendedName>
</protein>
<accession>Q5RAM7</accession>
<feature type="initiator methionine" description="Removed" evidence="2">
    <location>
        <position position="1"/>
    </location>
</feature>
<feature type="chain" id="PRO_0000232446" description="Prefoldin subunit 1">
    <location>
        <begin position="2"/>
        <end position="122"/>
    </location>
</feature>
<feature type="modified residue" description="N-acetylalanine" evidence="2">
    <location>
        <position position="2"/>
    </location>
</feature>